<keyword id="KW-0068">Autocatalytic cleavage</keyword>
<keyword id="KW-0963">Cytoplasm</keyword>
<keyword id="KW-0210">Decarboxylase</keyword>
<keyword id="KW-0456">Lyase</keyword>
<keyword id="KW-0566">Pantothenate biosynthesis</keyword>
<keyword id="KW-0670">Pyruvate</keyword>
<keyword id="KW-0704">Schiff base</keyword>
<keyword id="KW-0865">Zymogen</keyword>
<evidence type="ECO:0000255" key="1">
    <source>
        <dbReference type="HAMAP-Rule" id="MF_00446"/>
    </source>
</evidence>
<feature type="chain" id="PRO_1000124839" description="Aspartate 1-decarboxylase beta chain" evidence="1">
    <location>
        <begin position="1"/>
        <end position="24"/>
    </location>
</feature>
<feature type="chain" id="PRO_1000124840" description="Aspartate 1-decarboxylase alpha chain" evidence="1">
    <location>
        <begin position="25"/>
        <end position="118"/>
    </location>
</feature>
<feature type="active site" description="Schiff-base intermediate with substrate; via pyruvic acid" evidence="1">
    <location>
        <position position="25"/>
    </location>
</feature>
<feature type="active site" description="Proton donor" evidence="1">
    <location>
        <position position="58"/>
    </location>
</feature>
<feature type="binding site" evidence="1">
    <location>
        <position position="57"/>
    </location>
    <ligand>
        <name>substrate</name>
    </ligand>
</feature>
<feature type="binding site" evidence="1">
    <location>
        <begin position="73"/>
        <end position="75"/>
    </location>
    <ligand>
        <name>substrate</name>
    </ligand>
</feature>
<feature type="modified residue" description="Pyruvic acid (Ser)" evidence="1">
    <location>
        <position position="25"/>
    </location>
</feature>
<gene>
    <name evidence="1" type="primary">panD</name>
    <name type="ordered locus">LBF_2227</name>
</gene>
<protein>
    <recommendedName>
        <fullName evidence="1">Aspartate 1-decarboxylase</fullName>
        <ecNumber evidence="1">4.1.1.11</ecNumber>
    </recommendedName>
    <alternativeName>
        <fullName evidence="1">Aspartate alpha-decarboxylase</fullName>
    </alternativeName>
    <component>
        <recommendedName>
            <fullName evidence="1">Aspartate 1-decarboxylase beta chain</fullName>
        </recommendedName>
    </component>
    <component>
        <recommendedName>
            <fullName evidence="1">Aspartate 1-decarboxylase alpha chain</fullName>
        </recommendedName>
    </component>
</protein>
<organism>
    <name type="scientific">Leptospira biflexa serovar Patoc (strain Patoc 1 / Ames)</name>
    <dbReference type="NCBI Taxonomy" id="355278"/>
    <lineage>
        <taxon>Bacteria</taxon>
        <taxon>Pseudomonadati</taxon>
        <taxon>Spirochaetota</taxon>
        <taxon>Spirochaetia</taxon>
        <taxon>Leptospirales</taxon>
        <taxon>Leptospiraceae</taxon>
        <taxon>Leptospira</taxon>
    </lineage>
</organism>
<name>PAND_LEPBA</name>
<reference key="1">
    <citation type="journal article" date="2008" name="PLoS ONE">
        <title>Genome sequence of the saprophyte Leptospira biflexa provides insights into the evolution of Leptospira and the pathogenesis of leptospirosis.</title>
        <authorList>
            <person name="Picardeau M."/>
            <person name="Bulach D.M."/>
            <person name="Bouchier C."/>
            <person name="Zuerner R.L."/>
            <person name="Zidane N."/>
            <person name="Wilson P.J."/>
            <person name="Creno S."/>
            <person name="Kuczek E.S."/>
            <person name="Bommezzadri S."/>
            <person name="Davis J.C."/>
            <person name="McGrath A."/>
            <person name="Johnson M.J."/>
            <person name="Boursaux-Eude C."/>
            <person name="Seemann T."/>
            <person name="Rouy Z."/>
            <person name="Coppel R.L."/>
            <person name="Rood J.I."/>
            <person name="Lajus A."/>
            <person name="Davies J.K."/>
            <person name="Medigue C."/>
            <person name="Adler B."/>
        </authorList>
    </citation>
    <scope>NUCLEOTIDE SEQUENCE [LARGE SCALE GENOMIC DNA]</scope>
    <source>
        <strain>Patoc 1 / Ames</strain>
    </source>
</reference>
<proteinExistence type="inferred from homology"/>
<comment type="function">
    <text evidence="1">Catalyzes the pyruvoyl-dependent decarboxylation of aspartate to produce beta-alanine.</text>
</comment>
<comment type="catalytic activity">
    <reaction evidence="1">
        <text>L-aspartate + H(+) = beta-alanine + CO2</text>
        <dbReference type="Rhea" id="RHEA:19497"/>
        <dbReference type="ChEBI" id="CHEBI:15378"/>
        <dbReference type="ChEBI" id="CHEBI:16526"/>
        <dbReference type="ChEBI" id="CHEBI:29991"/>
        <dbReference type="ChEBI" id="CHEBI:57966"/>
        <dbReference type="EC" id="4.1.1.11"/>
    </reaction>
</comment>
<comment type="cofactor">
    <cofactor evidence="1">
        <name>pyruvate</name>
        <dbReference type="ChEBI" id="CHEBI:15361"/>
    </cofactor>
    <text evidence="1">Binds 1 pyruvoyl group covalently per subunit.</text>
</comment>
<comment type="pathway">
    <text evidence="1">Cofactor biosynthesis; (R)-pantothenate biosynthesis; beta-alanine from L-aspartate: step 1/1.</text>
</comment>
<comment type="subunit">
    <text evidence="1">Heterooctamer of four alpha and four beta subunits.</text>
</comment>
<comment type="subcellular location">
    <subcellularLocation>
        <location evidence="1">Cytoplasm</location>
    </subcellularLocation>
</comment>
<comment type="PTM">
    <text evidence="1">Is synthesized initially as an inactive proenzyme, which is activated by self-cleavage at a specific serine bond to produce a beta-subunit with a hydroxyl group at its C-terminus and an alpha-subunit with a pyruvoyl group at its N-terminus.</text>
</comment>
<comment type="similarity">
    <text evidence="1">Belongs to the PanD family.</text>
</comment>
<dbReference type="EC" id="4.1.1.11" evidence="1"/>
<dbReference type="EMBL" id="CP000777">
    <property type="protein sequence ID" value="ABZ94724.1"/>
    <property type="molecule type" value="Genomic_DNA"/>
</dbReference>
<dbReference type="RefSeq" id="WP_012389256.1">
    <property type="nucleotide sequence ID" value="NC_010842.1"/>
</dbReference>
<dbReference type="SMR" id="B0SBX0"/>
<dbReference type="KEGG" id="lbf:LBF_2227"/>
<dbReference type="HOGENOM" id="CLU_115305_2_0_12"/>
<dbReference type="UniPathway" id="UPA00028">
    <property type="reaction ID" value="UER00002"/>
</dbReference>
<dbReference type="GO" id="GO:0005829">
    <property type="term" value="C:cytosol"/>
    <property type="evidence" value="ECO:0007669"/>
    <property type="project" value="TreeGrafter"/>
</dbReference>
<dbReference type="GO" id="GO:0004068">
    <property type="term" value="F:aspartate 1-decarboxylase activity"/>
    <property type="evidence" value="ECO:0007669"/>
    <property type="project" value="UniProtKB-UniRule"/>
</dbReference>
<dbReference type="GO" id="GO:0006523">
    <property type="term" value="P:alanine biosynthetic process"/>
    <property type="evidence" value="ECO:0007669"/>
    <property type="project" value="InterPro"/>
</dbReference>
<dbReference type="GO" id="GO:0015940">
    <property type="term" value="P:pantothenate biosynthetic process"/>
    <property type="evidence" value="ECO:0007669"/>
    <property type="project" value="UniProtKB-UniRule"/>
</dbReference>
<dbReference type="CDD" id="cd06919">
    <property type="entry name" value="Asp_decarbox"/>
    <property type="match status" value="1"/>
</dbReference>
<dbReference type="Gene3D" id="2.40.40.20">
    <property type="match status" value="1"/>
</dbReference>
<dbReference type="HAMAP" id="MF_00446">
    <property type="entry name" value="PanD"/>
    <property type="match status" value="1"/>
</dbReference>
<dbReference type="InterPro" id="IPR009010">
    <property type="entry name" value="Asp_de-COase-like_dom_sf"/>
</dbReference>
<dbReference type="InterPro" id="IPR003190">
    <property type="entry name" value="Asp_decarbox"/>
</dbReference>
<dbReference type="NCBIfam" id="TIGR00223">
    <property type="entry name" value="panD"/>
    <property type="match status" value="1"/>
</dbReference>
<dbReference type="PANTHER" id="PTHR21012">
    <property type="entry name" value="ASPARTATE 1-DECARBOXYLASE"/>
    <property type="match status" value="1"/>
</dbReference>
<dbReference type="PANTHER" id="PTHR21012:SF0">
    <property type="entry name" value="ASPARTATE 1-DECARBOXYLASE"/>
    <property type="match status" value="1"/>
</dbReference>
<dbReference type="Pfam" id="PF02261">
    <property type="entry name" value="Asp_decarbox"/>
    <property type="match status" value="1"/>
</dbReference>
<dbReference type="PIRSF" id="PIRSF006246">
    <property type="entry name" value="Asp_decarbox"/>
    <property type="match status" value="1"/>
</dbReference>
<dbReference type="SUPFAM" id="SSF50692">
    <property type="entry name" value="ADC-like"/>
    <property type="match status" value="1"/>
</dbReference>
<accession>B0SBX0</accession>
<sequence>MIITVCKGKIHRAVVTEAELHYEGSLTVDQDLMDMAGMKPYEQVSVVNVNNGARFETYLIVGERGSGTICLNGAAARLGMKGDKVIIITYGQVEEKDLPNDYQPKVVFVDENNRPKKA</sequence>